<feature type="signal peptide" evidence="2">
    <location>
        <begin position="1"/>
        <end position="49"/>
    </location>
</feature>
<feature type="chain" id="PRO_0000041129" description="Outer capsid glycoprotein VP7">
    <location>
        <begin position="50"/>
        <end position="332"/>
    </location>
</feature>
<feature type="glycosylation site" description="N-linked (GlcNAc...) asparagine; by host" evidence="2">
    <location>
        <position position="67"/>
    </location>
</feature>
<feature type="glycosylation site" description="N-linked (GlcNAc...) asparagine; by host" evidence="2">
    <location>
        <position position="152"/>
    </location>
</feature>
<feature type="glycosylation site" description="N-linked (GlcNAc...) asparagine; by host" evidence="2">
    <location>
        <position position="225"/>
    </location>
</feature>
<reference key="1">
    <citation type="journal article" date="1991" name="Virology">
        <title>Sequence conservation of gene 8 between human and porcine group C rotaviruses and its relationship to the VP7 gene of group A rotaviruses.</title>
        <authorList>
            <person name="Qian Y.A."/>
            <person name="Jiang B."/>
            <person name="Saif L.J."/>
            <person name="Kang S.Y."/>
            <person name="Ishimaru Y."/>
            <person name="Yamashita Y."/>
            <person name="Oseto M."/>
            <person name="Green K.Y."/>
        </authorList>
    </citation>
    <scope>NUCLEOTIDE SEQUENCE [MRNA]</scope>
</reference>
<reference key="2">
    <citation type="journal article" date="1996" name="Arch. Virol.">
        <title>Sequence conservation and expression of the gene encoding the outer capsid glycoprotein among human group C rotaviruses of global distribution.</title>
        <authorList>
            <person name="Jiang B."/>
            <person name="Tsunemitsu H."/>
            <person name="Dennehy P.H."/>
            <person name="Oishi I."/>
            <person name="Brown D."/>
            <person name="Schnagl R.D."/>
            <person name="Oseto M."/>
            <person name="Fang Z.Y."/>
            <person name="Avendano L.F."/>
            <person name="Saif L.J."/>
            <person name="Glass R.I."/>
        </authorList>
    </citation>
    <scope>NUCLEOTIDE SEQUENCE [GENOMIC RNA]</scope>
</reference>
<name>VP7_ROTHE</name>
<accession>P30216</accession>
<protein>
    <recommendedName>
        <fullName evidence="3">Outer capsid glycoprotein VP7</fullName>
    </recommendedName>
</protein>
<sequence>MVCTTLYTVCAILFILFIYILLFRKMFHLITDTLIVILILSNCVEWSQGQMFIDDIYYNGNVETIINSTDPFNVESLCIYFPNAIVGSQGPGKSDGHLNDGNYAQTIATLFETKGFPKGSIILKTYTQTSDFINSVEMTCSYNIVIIPDSPNDSESIEQIAEWILNVWRCDDMNLEIYTYEQIGINNLWAAFGSDCDISVCPLDTTSNGIGCSPASTETYEVVSNDTQLALINVVDNVRHRIQMNTAQCKLKNCIKGEARLNTALIRISTSSSFDNSLSPLNNGQTTRSFKINAKKWWTIFYTIIDYINTIVQAMTPRHRAIYPEGWMLRYA</sequence>
<organismHost>
    <name type="scientific">Homo sapiens</name>
    <name type="common">Human</name>
    <dbReference type="NCBI Taxonomy" id="9606"/>
</organismHost>
<keyword id="KW-0106">Calcium</keyword>
<keyword id="KW-0167">Capsid protein</keyword>
<keyword id="KW-1015">Disulfide bond</keyword>
<keyword id="KW-0325">Glycoprotein</keyword>
<keyword id="KW-1038">Host endoplasmic reticulum</keyword>
<keyword id="KW-0945">Host-virus interaction</keyword>
<keyword id="KW-0479">Metal-binding</keyword>
<keyword id="KW-1152">Outer capsid protein</keyword>
<keyword id="KW-0732">Signal</keyword>
<keyword id="KW-1146">T=13 icosahedral capsid protein</keyword>
<keyword id="KW-0946">Virion</keyword>
<comment type="function">
    <text evidence="3">Calcium-binding protein that interacts with rotavirus cell receptors once the initial attachment by VP4 has been achieved. Rotavirus attachment and entry into the host cell probably involves multiple sequential contacts between the outer capsid proteins VP4 and VP7, and the cell receptors. Following entry into the host cell, low intracellular or intravesicular Ca(2+) concentration probably causes the calcium-stabilized VP7 trimers to dissociate from the virion. This step is probably necessary for the membrane-disrupting entry step and the release of VP4, which is locked onto the virion by VP7.</text>
</comment>
<comment type="subunit">
    <text evidence="3">Homotrimer; disulfide-linked. 2 Ca(2+) ions bound at each subunit interface in the trimer hold the trimer together. Interacts with the intermediate capsid protein VP6. Interacts with the outer capsid protein VP5*.</text>
</comment>
<comment type="subcellular location">
    <subcellularLocation>
        <location evidence="3">Virion</location>
    </subcellularLocation>
    <subcellularLocation>
        <location evidence="3">Host endoplasmic reticulum lumen</location>
    </subcellularLocation>
    <text evidence="3">The outer layer contains 780 copies of VP7, grouped as 260 trimers. Immature double-layered particles assembled in the cytoplasm bud across the membrane of the endoplasmic reticulum, acquiring during this process a transient lipid membrane that is modified with the ER resident viral glycoproteins NSP4 and VP7; these enveloped particles also contain VP4. As the particles move towards the interior of the ER. cisternae, the transient lipid membrane and the non-structural protein NSP4 are lost, while the virus surface proteins VP4 and VP7 rearrange to form the outermost virus protein layer, yielding mature infectious triple-layered particles.</text>
</comment>
<comment type="PTM">
    <text evidence="1">N-glycosylated.</text>
</comment>
<comment type="PTM">
    <text evidence="1">Intramolecular disulfide bonds.</text>
</comment>
<comment type="similarity">
    <text evidence="3">Belongs to the rotavirus VP7 family.</text>
</comment>
<proteinExistence type="evidence at transcript level"/>
<dbReference type="EMBL" id="M61100">
    <property type="protein sequence ID" value="AAA47352.1"/>
    <property type="molecule type" value="mRNA"/>
</dbReference>
<dbReference type="EMBL" id="U20991">
    <property type="protein sequence ID" value="AAC54785.1"/>
    <property type="molecule type" value="Genomic_RNA"/>
</dbReference>
<dbReference type="PIR" id="B39988">
    <property type="entry name" value="VGXR88"/>
</dbReference>
<dbReference type="SMR" id="P30216"/>
<dbReference type="GO" id="GO:0044166">
    <property type="term" value="C:host cell endoplasmic reticulum lumen"/>
    <property type="evidence" value="ECO:0007669"/>
    <property type="project" value="UniProtKB-SubCell"/>
</dbReference>
<dbReference type="GO" id="GO:0039621">
    <property type="term" value="C:T=13 icosahedral viral capsid"/>
    <property type="evidence" value="ECO:0007669"/>
    <property type="project" value="UniProtKB-UniRule"/>
</dbReference>
<dbReference type="GO" id="GO:0039624">
    <property type="term" value="C:viral outer capsid"/>
    <property type="evidence" value="ECO:0007669"/>
    <property type="project" value="UniProtKB-UniRule"/>
</dbReference>
<dbReference type="GO" id="GO:0046872">
    <property type="term" value="F:metal ion binding"/>
    <property type="evidence" value="ECO:0007669"/>
    <property type="project" value="UniProtKB-KW"/>
</dbReference>
<dbReference type="Gene3D" id="3.40.50.11130">
    <property type="entry name" value="Glycoprotein VP7, domain 1"/>
    <property type="match status" value="1"/>
</dbReference>
<dbReference type="Gene3D" id="2.60.120.800">
    <property type="entry name" value="Rotavirus outer-layer protein VP7, domain 2"/>
    <property type="match status" value="1"/>
</dbReference>
<dbReference type="HAMAP" id="MF_04130">
    <property type="entry name" value="Rota_VP7"/>
    <property type="match status" value="1"/>
</dbReference>
<dbReference type="InterPro" id="IPR001963">
    <property type="entry name" value="VP7"/>
</dbReference>
<dbReference type="InterPro" id="IPR042207">
    <property type="entry name" value="VP7_1"/>
</dbReference>
<dbReference type="InterPro" id="IPR042210">
    <property type="entry name" value="VP7_2"/>
</dbReference>
<dbReference type="Pfam" id="PF00434">
    <property type="entry name" value="VP7"/>
    <property type="match status" value="1"/>
</dbReference>
<organism>
    <name type="scientific">Rotavirus C (isolate RVC/Human/Japan/88-220/1988)</name>
    <name type="common">RV-C</name>
    <dbReference type="NCBI Taxonomy" id="31565"/>
    <lineage>
        <taxon>Viruses</taxon>
        <taxon>Riboviria</taxon>
        <taxon>Orthornavirae</taxon>
        <taxon>Duplornaviricota</taxon>
        <taxon>Resentoviricetes</taxon>
        <taxon>Reovirales</taxon>
        <taxon>Sedoreoviridae</taxon>
        <taxon>Rotavirus</taxon>
        <taxon>Rotavirus C</taxon>
    </lineage>
</organism>
<evidence type="ECO:0000250" key="1"/>
<evidence type="ECO:0000255" key="2"/>
<evidence type="ECO:0000255" key="3">
    <source>
        <dbReference type="HAMAP-Rule" id="MF_04130"/>
    </source>
</evidence>